<gene>
    <name evidence="1" type="primary">rplU</name>
    <name type="ordered locus">SERP1211</name>
</gene>
<sequence>MFAIIETGGKQIKVEEGQEIYVEKLNANEGDSFTFDKVLFVGGDSVKVGAPTVEGASVTATVNKQGRGKKITVFTYKRRKDSKRKKGHRQPYTKLTIDKINA</sequence>
<name>RL21_STAEQ</name>
<feature type="chain" id="PRO_0000224940" description="Large ribosomal subunit protein bL21">
    <location>
        <begin position="1"/>
        <end position="102"/>
    </location>
</feature>
<feature type="region of interest" description="Disordered" evidence="2">
    <location>
        <begin position="79"/>
        <end position="102"/>
    </location>
</feature>
<feature type="compositionally biased region" description="Basic residues" evidence="2">
    <location>
        <begin position="79"/>
        <end position="91"/>
    </location>
</feature>
<organism>
    <name type="scientific">Staphylococcus epidermidis (strain ATCC 35984 / DSM 28319 / BCRC 17069 / CCUG 31568 / BM 3577 / RP62A)</name>
    <dbReference type="NCBI Taxonomy" id="176279"/>
    <lineage>
        <taxon>Bacteria</taxon>
        <taxon>Bacillati</taxon>
        <taxon>Bacillota</taxon>
        <taxon>Bacilli</taxon>
        <taxon>Bacillales</taxon>
        <taxon>Staphylococcaceae</taxon>
        <taxon>Staphylococcus</taxon>
    </lineage>
</organism>
<reference key="1">
    <citation type="journal article" date="2005" name="J. Bacteriol.">
        <title>Insights on evolution of virulence and resistance from the complete genome analysis of an early methicillin-resistant Staphylococcus aureus strain and a biofilm-producing methicillin-resistant Staphylococcus epidermidis strain.</title>
        <authorList>
            <person name="Gill S.R."/>
            <person name="Fouts D.E."/>
            <person name="Archer G.L."/>
            <person name="Mongodin E.F."/>
            <person name="DeBoy R.T."/>
            <person name="Ravel J."/>
            <person name="Paulsen I.T."/>
            <person name="Kolonay J.F."/>
            <person name="Brinkac L.M."/>
            <person name="Beanan M.J."/>
            <person name="Dodson R.J."/>
            <person name="Daugherty S.C."/>
            <person name="Madupu R."/>
            <person name="Angiuoli S.V."/>
            <person name="Durkin A.S."/>
            <person name="Haft D.H."/>
            <person name="Vamathevan J.J."/>
            <person name="Khouri H."/>
            <person name="Utterback T.R."/>
            <person name="Lee C."/>
            <person name="Dimitrov G."/>
            <person name="Jiang L."/>
            <person name="Qin H."/>
            <person name="Weidman J."/>
            <person name="Tran K."/>
            <person name="Kang K.H."/>
            <person name="Hance I.R."/>
            <person name="Nelson K.E."/>
            <person name="Fraser C.M."/>
        </authorList>
    </citation>
    <scope>NUCLEOTIDE SEQUENCE [LARGE SCALE GENOMIC DNA]</scope>
    <source>
        <strain>ATCC 35984 / DSM 28319 / BCRC 17069 / CCUG 31568 / BM 3577 / RP62A</strain>
    </source>
</reference>
<keyword id="KW-1185">Reference proteome</keyword>
<keyword id="KW-0687">Ribonucleoprotein</keyword>
<keyword id="KW-0689">Ribosomal protein</keyword>
<keyword id="KW-0694">RNA-binding</keyword>
<keyword id="KW-0699">rRNA-binding</keyword>
<accession>Q5HNQ4</accession>
<evidence type="ECO:0000255" key="1">
    <source>
        <dbReference type="HAMAP-Rule" id="MF_01363"/>
    </source>
</evidence>
<evidence type="ECO:0000256" key="2">
    <source>
        <dbReference type="SAM" id="MobiDB-lite"/>
    </source>
</evidence>
<evidence type="ECO:0000305" key="3"/>
<dbReference type="EMBL" id="CP000029">
    <property type="protein sequence ID" value="AAW54604.1"/>
    <property type="molecule type" value="Genomic_DNA"/>
</dbReference>
<dbReference type="RefSeq" id="WP_001830820.1">
    <property type="nucleotide sequence ID" value="NC_002976.3"/>
</dbReference>
<dbReference type="SMR" id="Q5HNQ4"/>
<dbReference type="STRING" id="176279.SERP1211"/>
<dbReference type="GeneID" id="50018555"/>
<dbReference type="KEGG" id="ser:SERP1211"/>
<dbReference type="eggNOG" id="COG0261">
    <property type="taxonomic scope" value="Bacteria"/>
</dbReference>
<dbReference type="HOGENOM" id="CLU_061463_3_2_9"/>
<dbReference type="Proteomes" id="UP000000531">
    <property type="component" value="Chromosome"/>
</dbReference>
<dbReference type="GO" id="GO:0005737">
    <property type="term" value="C:cytoplasm"/>
    <property type="evidence" value="ECO:0007669"/>
    <property type="project" value="UniProtKB-ARBA"/>
</dbReference>
<dbReference type="GO" id="GO:1990904">
    <property type="term" value="C:ribonucleoprotein complex"/>
    <property type="evidence" value="ECO:0007669"/>
    <property type="project" value="UniProtKB-KW"/>
</dbReference>
<dbReference type="GO" id="GO:0005840">
    <property type="term" value="C:ribosome"/>
    <property type="evidence" value="ECO:0007669"/>
    <property type="project" value="UniProtKB-KW"/>
</dbReference>
<dbReference type="GO" id="GO:0019843">
    <property type="term" value="F:rRNA binding"/>
    <property type="evidence" value="ECO:0007669"/>
    <property type="project" value="UniProtKB-UniRule"/>
</dbReference>
<dbReference type="GO" id="GO:0003735">
    <property type="term" value="F:structural constituent of ribosome"/>
    <property type="evidence" value="ECO:0007669"/>
    <property type="project" value="InterPro"/>
</dbReference>
<dbReference type="GO" id="GO:0006412">
    <property type="term" value="P:translation"/>
    <property type="evidence" value="ECO:0007669"/>
    <property type="project" value="UniProtKB-UniRule"/>
</dbReference>
<dbReference type="HAMAP" id="MF_01363">
    <property type="entry name" value="Ribosomal_bL21"/>
    <property type="match status" value="1"/>
</dbReference>
<dbReference type="InterPro" id="IPR028909">
    <property type="entry name" value="bL21-like"/>
</dbReference>
<dbReference type="InterPro" id="IPR036164">
    <property type="entry name" value="bL21-like_sf"/>
</dbReference>
<dbReference type="InterPro" id="IPR001787">
    <property type="entry name" value="Ribosomal_bL21"/>
</dbReference>
<dbReference type="NCBIfam" id="TIGR00061">
    <property type="entry name" value="L21"/>
    <property type="match status" value="1"/>
</dbReference>
<dbReference type="PANTHER" id="PTHR21349">
    <property type="entry name" value="50S RIBOSOMAL PROTEIN L21"/>
    <property type="match status" value="1"/>
</dbReference>
<dbReference type="PANTHER" id="PTHR21349:SF0">
    <property type="entry name" value="LARGE RIBOSOMAL SUBUNIT PROTEIN BL21M"/>
    <property type="match status" value="1"/>
</dbReference>
<dbReference type="Pfam" id="PF00829">
    <property type="entry name" value="Ribosomal_L21p"/>
    <property type="match status" value="1"/>
</dbReference>
<dbReference type="SUPFAM" id="SSF141091">
    <property type="entry name" value="L21p-like"/>
    <property type="match status" value="1"/>
</dbReference>
<proteinExistence type="inferred from homology"/>
<protein>
    <recommendedName>
        <fullName evidence="1">Large ribosomal subunit protein bL21</fullName>
    </recommendedName>
    <alternativeName>
        <fullName evidence="3">50S ribosomal protein L21</fullName>
    </alternativeName>
</protein>
<comment type="function">
    <text evidence="1">This protein binds to 23S rRNA in the presence of protein L20.</text>
</comment>
<comment type="subunit">
    <text evidence="1">Part of the 50S ribosomal subunit. Contacts protein L20.</text>
</comment>
<comment type="similarity">
    <text evidence="1">Belongs to the bacterial ribosomal protein bL21 family.</text>
</comment>